<evidence type="ECO:0000255" key="1">
    <source>
        <dbReference type="PROSITE-ProRule" id="PRU00108"/>
    </source>
</evidence>
<evidence type="ECO:0000256" key="2">
    <source>
        <dbReference type="SAM" id="MobiDB-lite"/>
    </source>
</evidence>
<evidence type="ECO:0000305" key="3"/>
<keyword id="KW-0217">Developmental protein</keyword>
<keyword id="KW-0238">DNA-binding</keyword>
<keyword id="KW-0371">Homeobox</keyword>
<keyword id="KW-0539">Nucleus</keyword>
<keyword id="KW-1185">Reference proteome</keyword>
<keyword id="KW-0804">Transcription</keyword>
<keyword id="KW-0805">Transcription regulation</keyword>
<feature type="chain" id="PRO_0000200072" description="Homeobox protein Hox-A7">
    <location>
        <begin position="1"/>
        <end position="229"/>
    </location>
</feature>
<feature type="DNA-binding region" description="Homeobox" evidence="1">
    <location>
        <begin position="129"/>
        <end position="188"/>
    </location>
</feature>
<feature type="region of interest" description="Disordered" evidence="2">
    <location>
        <begin position="186"/>
        <end position="229"/>
    </location>
</feature>
<feature type="short sequence motif" description="Antp-type hexapeptide">
    <location>
        <begin position="118"/>
        <end position="123"/>
    </location>
</feature>
<feature type="compositionally biased region" description="Acidic residues" evidence="2">
    <location>
        <begin position="213"/>
        <end position="229"/>
    </location>
</feature>
<feature type="sequence conflict" description="In Ref. 1; AAA37833." evidence="3" ref="1">
    <original>GAG</original>
    <variation>APA</variation>
    <location>
        <begin position="43"/>
        <end position="45"/>
    </location>
</feature>
<organism>
    <name type="scientific">Mus musculus</name>
    <name type="common">Mouse</name>
    <dbReference type="NCBI Taxonomy" id="10090"/>
    <lineage>
        <taxon>Eukaryota</taxon>
        <taxon>Metazoa</taxon>
        <taxon>Chordata</taxon>
        <taxon>Craniata</taxon>
        <taxon>Vertebrata</taxon>
        <taxon>Euteleostomi</taxon>
        <taxon>Mammalia</taxon>
        <taxon>Eutheria</taxon>
        <taxon>Euarchontoglires</taxon>
        <taxon>Glires</taxon>
        <taxon>Rodentia</taxon>
        <taxon>Myomorpha</taxon>
        <taxon>Muroidea</taxon>
        <taxon>Muridae</taxon>
        <taxon>Murinae</taxon>
        <taxon>Mus</taxon>
        <taxon>Mus</taxon>
    </lineage>
</organism>
<reference key="1">
    <citation type="journal article" date="1987" name="Proc. Natl. Acad. Sci. U.S.A.">
        <title>Primary structure and nuclear localization of a murine homeodomain protein.</title>
        <authorList>
            <person name="Kessel M."/>
            <person name="Schulze F."/>
            <person name="Fibi M."/>
            <person name="Gruss P."/>
        </authorList>
    </citation>
    <scope>NUCLEOTIDE SEQUENCE [MRNA]</scope>
</reference>
<reference key="2">
    <citation type="journal article" date="1995" name="Gene">
        <title>Organization, sequence and regulation of expression of the murine Hoxa-7 gene.</title>
        <authorList>
            <person name="Parikh H."/>
            <person name="Shah S."/>
            <person name="Hilt D."/>
            <person name="Peterkofsky A."/>
        </authorList>
    </citation>
    <scope>NUCLEOTIDE SEQUENCE [GENOMIC DNA]</scope>
    <source>
        <strain>BALB/cJ</strain>
    </source>
</reference>
<reference key="3">
    <citation type="journal article" date="2005" name="Science">
        <title>The transcriptional landscape of the mammalian genome.</title>
        <authorList>
            <person name="Carninci P."/>
            <person name="Kasukawa T."/>
            <person name="Katayama S."/>
            <person name="Gough J."/>
            <person name="Frith M.C."/>
            <person name="Maeda N."/>
            <person name="Oyama R."/>
            <person name="Ravasi T."/>
            <person name="Lenhard B."/>
            <person name="Wells C."/>
            <person name="Kodzius R."/>
            <person name="Shimokawa K."/>
            <person name="Bajic V.B."/>
            <person name="Brenner S.E."/>
            <person name="Batalov S."/>
            <person name="Forrest A.R."/>
            <person name="Zavolan M."/>
            <person name="Davis M.J."/>
            <person name="Wilming L.G."/>
            <person name="Aidinis V."/>
            <person name="Allen J.E."/>
            <person name="Ambesi-Impiombato A."/>
            <person name="Apweiler R."/>
            <person name="Aturaliya R.N."/>
            <person name="Bailey T.L."/>
            <person name="Bansal M."/>
            <person name="Baxter L."/>
            <person name="Beisel K.W."/>
            <person name="Bersano T."/>
            <person name="Bono H."/>
            <person name="Chalk A.M."/>
            <person name="Chiu K.P."/>
            <person name="Choudhary V."/>
            <person name="Christoffels A."/>
            <person name="Clutterbuck D.R."/>
            <person name="Crowe M.L."/>
            <person name="Dalla E."/>
            <person name="Dalrymple B.P."/>
            <person name="de Bono B."/>
            <person name="Della Gatta G."/>
            <person name="di Bernardo D."/>
            <person name="Down T."/>
            <person name="Engstrom P."/>
            <person name="Fagiolini M."/>
            <person name="Faulkner G."/>
            <person name="Fletcher C.F."/>
            <person name="Fukushima T."/>
            <person name="Furuno M."/>
            <person name="Futaki S."/>
            <person name="Gariboldi M."/>
            <person name="Georgii-Hemming P."/>
            <person name="Gingeras T.R."/>
            <person name="Gojobori T."/>
            <person name="Green R.E."/>
            <person name="Gustincich S."/>
            <person name="Harbers M."/>
            <person name="Hayashi Y."/>
            <person name="Hensch T.K."/>
            <person name="Hirokawa N."/>
            <person name="Hill D."/>
            <person name="Huminiecki L."/>
            <person name="Iacono M."/>
            <person name="Ikeo K."/>
            <person name="Iwama A."/>
            <person name="Ishikawa T."/>
            <person name="Jakt M."/>
            <person name="Kanapin A."/>
            <person name="Katoh M."/>
            <person name="Kawasawa Y."/>
            <person name="Kelso J."/>
            <person name="Kitamura H."/>
            <person name="Kitano H."/>
            <person name="Kollias G."/>
            <person name="Krishnan S.P."/>
            <person name="Kruger A."/>
            <person name="Kummerfeld S.K."/>
            <person name="Kurochkin I.V."/>
            <person name="Lareau L.F."/>
            <person name="Lazarevic D."/>
            <person name="Lipovich L."/>
            <person name="Liu J."/>
            <person name="Liuni S."/>
            <person name="McWilliam S."/>
            <person name="Madan Babu M."/>
            <person name="Madera M."/>
            <person name="Marchionni L."/>
            <person name="Matsuda H."/>
            <person name="Matsuzawa S."/>
            <person name="Miki H."/>
            <person name="Mignone F."/>
            <person name="Miyake S."/>
            <person name="Morris K."/>
            <person name="Mottagui-Tabar S."/>
            <person name="Mulder N."/>
            <person name="Nakano N."/>
            <person name="Nakauchi H."/>
            <person name="Ng P."/>
            <person name="Nilsson R."/>
            <person name="Nishiguchi S."/>
            <person name="Nishikawa S."/>
            <person name="Nori F."/>
            <person name="Ohara O."/>
            <person name="Okazaki Y."/>
            <person name="Orlando V."/>
            <person name="Pang K.C."/>
            <person name="Pavan W.J."/>
            <person name="Pavesi G."/>
            <person name="Pesole G."/>
            <person name="Petrovsky N."/>
            <person name="Piazza S."/>
            <person name="Reed J."/>
            <person name="Reid J.F."/>
            <person name="Ring B.Z."/>
            <person name="Ringwald M."/>
            <person name="Rost B."/>
            <person name="Ruan Y."/>
            <person name="Salzberg S.L."/>
            <person name="Sandelin A."/>
            <person name="Schneider C."/>
            <person name="Schoenbach C."/>
            <person name="Sekiguchi K."/>
            <person name="Semple C.A."/>
            <person name="Seno S."/>
            <person name="Sessa L."/>
            <person name="Sheng Y."/>
            <person name="Shibata Y."/>
            <person name="Shimada H."/>
            <person name="Shimada K."/>
            <person name="Silva D."/>
            <person name="Sinclair B."/>
            <person name="Sperling S."/>
            <person name="Stupka E."/>
            <person name="Sugiura K."/>
            <person name="Sultana R."/>
            <person name="Takenaka Y."/>
            <person name="Taki K."/>
            <person name="Tammoja K."/>
            <person name="Tan S.L."/>
            <person name="Tang S."/>
            <person name="Taylor M.S."/>
            <person name="Tegner J."/>
            <person name="Teichmann S.A."/>
            <person name="Ueda H.R."/>
            <person name="van Nimwegen E."/>
            <person name="Verardo R."/>
            <person name="Wei C.L."/>
            <person name="Yagi K."/>
            <person name="Yamanishi H."/>
            <person name="Zabarovsky E."/>
            <person name="Zhu S."/>
            <person name="Zimmer A."/>
            <person name="Hide W."/>
            <person name="Bult C."/>
            <person name="Grimmond S.M."/>
            <person name="Teasdale R.D."/>
            <person name="Liu E.T."/>
            <person name="Brusic V."/>
            <person name="Quackenbush J."/>
            <person name="Wahlestedt C."/>
            <person name="Mattick J.S."/>
            <person name="Hume D.A."/>
            <person name="Kai C."/>
            <person name="Sasaki D."/>
            <person name="Tomaru Y."/>
            <person name="Fukuda S."/>
            <person name="Kanamori-Katayama M."/>
            <person name="Suzuki M."/>
            <person name="Aoki J."/>
            <person name="Arakawa T."/>
            <person name="Iida J."/>
            <person name="Imamura K."/>
            <person name="Itoh M."/>
            <person name="Kato T."/>
            <person name="Kawaji H."/>
            <person name="Kawagashira N."/>
            <person name="Kawashima T."/>
            <person name="Kojima M."/>
            <person name="Kondo S."/>
            <person name="Konno H."/>
            <person name="Nakano K."/>
            <person name="Ninomiya N."/>
            <person name="Nishio T."/>
            <person name="Okada M."/>
            <person name="Plessy C."/>
            <person name="Shibata K."/>
            <person name="Shiraki T."/>
            <person name="Suzuki S."/>
            <person name="Tagami M."/>
            <person name="Waki K."/>
            <person name="Watahiki A."/>
            <person name="Okamura-Oho Y."/>
            <person name="Suzuki H."/>
            <person name="Kawai J."/>
            <person name="Hayashizaki Y."/>
        </authorList>
    </citation>
    <scope>NUCLEOTIDE SEQUENCE [LARGE SCALE MRNA]</scope>
    <source>
        <strain>C57BL/6J</strain>
        <tissue>Colon</tissue>
    </source>
</reference>
<reference key="4">
    <citation type="journal article" date="2004" name="Genome Res.">
        <title>The status, quality, and expansion of the NIH full-length cDNA project: the Mammalian Gene Collection (MGC).</title>
        <authorList>
            <consortium name="The MGC Project Team"/>
        </authorList>
    </citation>
    <scope>NUCLEOTIDE SEQUENCE [LARGE SCALE MRNA]</scope>
    <source>
        <tissue>Brain</tissue>
    </source>
</reference>
<reference key="5">
    <citation type="journal article" date="1985" name="Nature">
        <title>Structural analysis of murine genes containing homoeo box sequences and their expression in embryonal carcinoma cells.</title>
        <authorList>
            <person name="Colberg-Poley A.M."/>
            <person name="Voss S.D."/>
            <person name="Chowdhury K."/>
            <person name="Gruss P."/>
        </authorList>
    </citation>
    <scope>NUCLEOTIDE SEQUENCE OF 126-229</scope>
</reference>
<reference key="6">
    <citation type="journal article" date="1986" name="EMBO J.">
        <title>Sequential expression of murine homeo box genes during F9 EC cell differentiation.</title>
        <authorList>
            <person name="Breier G."/>
            <person name="Bucan M."/>
            <person name="Francke U."/>
            <person name="Colberg-Poley A.M."/>
            <person name="Gruss P."/>
        </authorList>
    </citation>
    <scope>NUCLEOTIDE SEQUENCE OF 129-197</scope>
</reference>
<name>HXA7_MOUSE</name>
<comment type="function">
    <text>Sequence-specific transcription factor which is part of a developmental regulatory system that provides cells with specific positional identities on the anterior-posterior axis.</text>
</comment>
<comment type="subcellular location">
    <subcellularLocation>
        <location>Nucleus</location>
    </subcellularLocation>
</comment>
<comment type="similarity">
    <text evidence="3">Belongs to the Antp homeobox family.</text>
</comment>
<protein>
    <recommendedName>
        <fullName>Homeobox protein Hox-A7</fullName>
    </recommendedName>
    <alternativeName>
        <fullName>Homeobox protein Hox-1.1</fullName>
    </alternativeName>
    <alternativeName>
        <fullName>Homeobox protein M6-12</fullName>
        <shortName>M6</shortName>
    </alternativeName>
</protein>
<dbReference type="EMBL" id="M17192">
    <property type="protein sequence ID" value="AAA37833.1"/>
    <property type="molecule type" value="mRNA"/>
</dbReference>
<dbReference type="EMBL" id="U15972">
    <property type="protein sequence ID" value="AAC52160.1"/>
    <property type="molecule type" value="Genomic_DNA"/>
</dbReference>
<dbReference type="EMBL" id="AK033500">
    <property type="protein sequence ID" value="BAC28323.1"/>
    <property type="molecule type" value="mRNA"/>
</dbReference>
<dbReference type="EMBL" id="BC131978">
    <property type="protein sequence ID" value="AAI31979.1"/>
    <property type="molecule type" value="mRNA"/>
</dbReference>
<dbReference type="EMBL" id="BC132643">
    <property type="protein sequence ID" value="AAI32644.1"/>
    <property type="molecule type" value="mRNA"/>
</dbReference>
<dbReference type="CCDS" id="CCDS20145.1"/>
<dbReference type="PIR" id="A03314">
    <property type="entry name" value="A03314"/>
</dbReference>
<dbReference type="PIR" id="A28329">
    <property type="entry name" value="A28329"/>
</dbReference>
<dbReference type="RefSeq" id="NP_001406196.1">
    <property type="nucleotide sequence ID" value="NM_001419267.1"/>
</dbReference>
<dbReference type="RefSeq" id="NP_001406197.1">
    <property type="nucleotide sequence ID" value="NM_001419268.1"/>
</dbReference>
<dbReference type="RefSeq" id="NP_001406198.1">
    <property type="nucleotide sequence ID" value="NM_001419269.1"/>
</dbReference>
<dbReference type="RefSeq" id="NP_034585.1">
    <property type="nucleotide sequence ID" value="NM_010455.3"/>
</dbReference>
<dbReference type="SMR" id="P02830"/>
<dbReference type="BioGRID" id="200372">
    <property type="interactions" value="1"/>
</dbReference>
<dbReference type="FunCoup" id="P02830">
    <property type="interactions" value="1108"/>
</dbReference>
<dbReference type="IntAct" id="P02830">
    <property type="interactions" value="1"/>
</dbReference>
<dbReference type="STRING" id="10090.ENSMUSP00000048648"/>
<dbReference type="PhosphoSitePlus" id="P02830"/>
<dbReference type="PaxDb" id="10090-ENSMUSP00000048648"/>
<dbReference type="ProteomicsDB" id="267021"/>
<dbReference type="Pumba" id="P02830"/>
<dbReference type="Antibodypedia" id="12389">
    <property type="antibodies" value="175 antibodies from 27 providers"/>
</dbReference>
<dbReference type="DNASU" id="15404"/>
<dbReference type="Ensembl" id="ENSMUST00000048715.9">
    <property type="protein sequence ID" value="ENSMUSP00000048648.7"/>
    <property type="gene ID" value="ENSMUSG00000038236.9"/>
</dbReference>
<dbReference type="GeneID" id="15404"/>
<dbReference type="KEGG" id="mmu:15404"/>
<dbReference type="UCSC" id="uc009byj.1">
    <property type="organism name" value="mouse"/>
</dbReference>
<dbReference type="AGR" id="MGI:96179"/>
<dbReference type="CTD" id="3204"/>
<dbReference type="MGI" id="MGI:96179">
    <property type="gene designation" value="Hoxa7"/>
</dbReference>
<dbReference type="VEuPathDB" id="HostDB:ENSMUSG00000038236"/>
<dbReference type="eggNOG" id="KOG0489">
    <property type="taxonomic scope" value="Eukaryota"/>
</dbReference>
<dbReference type="GeneTree" id="ENSGT00940000161013"/>
<dbReference type="HOGENOM" id="CLU_061398_1_1_1"/>
<dbReference type="InParanoid" id="P02830"/>
<dbReference type="OMA" id="YRMYPWM"/>
<dbReference type="OrthoDB" id="6159439at2759"/>
<dbReference type="PhylomeDB" id="P02830"/>
<dbReference type="TreeFam" id="TF316310"/>
<dbReference type="BioGRID-ORCS" id="15404">
    <property type="hits" value="4 hits in 80 CRISPR screens"/>
</dbReference>
<dbReference type="ChiTaRS" id="Hoxa7">
    <property type="organism name" value="mouse"/>
</dbReference>
<dbReference type="PRO" id="PR:P02830"/>
<dbReference type="Proteomes" id="UP000000589">
    <property type="component" value="Chromosome 6"/>
</dbReference>
<dbReference type="RNAct" id="P02830">
    <property type="molecule type" value="protein"/>
</dbReference>
<dbReference type="Bgee" id="ENSMUSG00000038236">
    <property type="expression patterns" value="Expressed in embryonic post-anal tail and 108 other cell types or tissues"/>
</dbReference>
<dbReference type="ExpressionAtlas" id="P02830">
    <property type="expression patterns" value="baseline and differential"/>
</dbReference>
<dbReference type="GO" id="GO:0031965">
    <property type="term" value="C:nuclear membrane"/>
    <property type="evidence" value="ECO:0007669"/>
    <property type="project" value="Ensembl"/>
</dbReference>
<dbReference type="GO" id="GO:0005654">
    <property type="term" value="C:nucleoplasm"/>
    <property type="evidence" value="ECO:0007669"/>
    <property type="project" value="Ensembl"/>
</dbReference>
<dbReference type="GO" id="GO:0005634">
    <property type="term" value="C:nucleus"/>
    <property type="evidence" value="ECO:0000314"/>
    <property type="project" value="MGI"/>
</dbReference>
<dbReference type="GO" id="GO:0003677">
    <property type="term" value="F:DNA binding"/>
    <property type="evidence" value="ECO:0000314"/>
    <property type="project" value="MGI"/>
</dbReference>
<dbReference type="GO" id="GO:0001228">
    <property type="term" value="F:DNA-binding transcription activator activity, RNA polymerase II-specific"/>
    <property type="evidence" value="ECO:0007669"/>
    <property type="project" value="Ensembl"/>
</dbReference>
<dbReference type="GO" id="GO:0003700">
    <property type="term" value="F:DNA-binding transcription factor activity"/>
    <property type="evidence" value="ECO:0000314"/>
    <property type="project" value="MGI"/>
</dbReference>
<dbReference type="GO" id="GO:0140297">
    <property type="term" value="F:DNA-binding transcription factor binding"/>
    <property type="evidence" value="ECO:0007669"/>
    <property type="project" value="Ensembl"/>
</dbReference>
<dbReference type="GO" id="GO:0000978">
    <property type="term" value="F:RNA polymerase II cis-regulatory region sequence-specific DNA binding"/>
    <property type="evidence" value="ECO:0007669"/>
    <property type="project" value="Ensembl"/>
</dbReference>
<dbReference type="GO" id="GO:0001525">
    <property type="term" value="P:angiogenesis"/>
    <property type="evidence" value="ECO:0007669"/>
    <property type="project" value="Ensembl"/>
</dbReference>
<dbReference type="GO" id="GO:0009952">
    <property type="term" value="P:anterior/posterior pattern specification"/>
    <property type="evidence" value="ECO:0000316"/>
    <property type="project" value="MGI"/>
</dbReference>
<dbReference type="GO" id="GO:0048704">
    <property type="term" value="P:embryonic skeletal system morphogenesis"/>
    <property type="evidence" value="ECO:0000316"/>
    <property type="project" value="MGI"/>
</dbReference>
<dbReference type="GO" id="GO:0001953">
    <property type="term" value="P:negative regulation of cell-matrix adhesion"/>
    <property type="evidence" value="ECO:0007669"/>
    <property type="project" value="Ensembl"/>
</dbReference>
<dbReference type="GO" id="GO:0045617">
    <property type="term" value="P:negative regulation of keratinocyte differentiation"/>
    <property type="evidence" value="ECO:0000266"/>
    <property type="project" value="MGI"/>
</dbReference>
<dbReference type="GO" id="GO:0002686">
    <property type="term" value="P:negative regulation of leukocyte migration"/>
    <property type="evidence" value="ECO:0007669"/>
    <property type="project" value="Ensembl"/>
</dbReference>
<dbReference type="GO" id="GO:0045656">
    <property type="term" value="P:negative regulation of monocyte differentiation"/>
    <property type="evidence" value="ECO:0007669"/>
    <property type="project" value="Ensembl"/>
</dbReference>
<dbReference type="GO" id="GO:0000122">
    <property type="term" value="P:negative regulation of transcription by RNA polymerase II"/>
    <property type="evidence" value="ECO:0000314"/>
    <property type="project" value="MGI"/>
</dbReference>
<dbReference type="GO" id="GO:0045944">
    <property type="term" value="P:positive regulation of transcription by RNA polymerase II"/>
    <property type="evidence" value="ECO:0000314"/>
    <property type="project" value="MGI"/>
</dbReference>
<dbReference type="GO" id="GO:0048863">
    <property type="term" value="P:stem cell differentiation"/>
    <property type="evidence" value="ECO:0000314"/>
    <property type="project" value="MGI"/>
</dbReference>
<dbReference type="CDD" id="cd00086">
    <property type="entry name" value="homeodomain"/>
    <property type="match status" value="1"/>
</dbReference>
<dbReference type="FunFam" id="1.10.10.60:FF:000017">
    <property type="entry name" value="Homeobox protein antennapedia"/>
    <property type="match status" value="1"/>
</dbReference>
<dbReference type="Gene3D" id="1.10.10.60">
    <property type="entry name" value="Homeodomain-like"/>
    <property type="match status" value="1"/>
</dbReference>
<dbReference type="InterPro" id="IPR050296">
    <property type="entry name" value="Antp_homeobox"/>
</dbReference>
<dbReference type="InterPro" id="IPR001356">
    <property type="entry name" value="HD"/>
</dbReference>
<dbReference type="InterPro" id="IPR020479">
    <property type="entry name" value="HD_metazoa"/>
</dbReference>
<dbReference type="InterPro" id="IPR017995">
    <property type="entry name" value="Homeobox_antennapedia"/>
</dbReference>
<dbReference type="InterPro" id="IPR001827">
    <property type="entry name" value="Homeobox_Antennapedia_CS"/>
</dbReference>
<dbReference type="InterPro" id="IPR017970">
    <property type="entry name" value="Homeobox_CS"/>
</dbReference>
<dbReference type="InterPro" id="IPR009057">
    <property type="entry name" value="Homeodomain-like_sf"/>
</dbReference>
<dbReference type="PANTHER" id="PTHR45659">
    <property type="entry name" value="HOMEOBOX PROTEIN HOX"/>
    <property type="match status" value="1"/>
</dbReference>
<dbReference type="PANTHER" id="PTHR45659:SF12">
    <property type="entry name" value="HOMEOBOX PROTEIN HOX-A7"/>
    <property type="match status" value="1"/>
</dbReference>
<dbReference type="Pfam" id="PF00046">
    <property type="entry name" value="Homeodomain"/>
    <property type="match status" value="1"/>
</dbReference>
<dbReference type="PRINTS" id="PR00025">
    <property type="entry name" value="ANTENNAPEDIA"/>
</dbReference>
<dbReference type="PRINTS" id="PR00024">
    <property type="entry name" value="HOMEOBOX"/>
</dbReference>
<dbReference type="SMART" id="SM00389">
    <property type="entry name" value="HOX"/>
    <property type="match status" value="1"/>
</dbReference>
<dbReference type="SUPFAM" id="SSF46689">
    <property type="entry name" value="Homeodomain-like"/>
    <property type="match status" value="1"/>
</dbReference>
<dbReference type="PROSITE" id="PS00032">
    <property type="entry name" value="ANTENNAPEDIA"/>
    <property type="match status" value="1"/>
</dbReference>
<dbReference type="PROSITE" id="PS00027">
    <property type="entry name" value="HOMEOBOX_1"/>
    <property type="match status" value="1"/>
</dbReference>
<dbReference type="PROSITE" id="PS50071">
    <property type="entry name" value="HOMEOBOX_2"/>
    <property type="match status" value="1"/>
</dbReference>
<accession>P02830</accession>
<accession>A2RS54</accession>
<accession>Q544P0</accession>
<gene>
    <name type="primary">Hoxa7</name>
    <name type="synonym">Hox-1.1</name>
    <name type="synonym">Hoxa-7</name>
</gene>
<sequence length="229" mass="25682">MSSSYYVNALFSKYTAGASLFQNAEPTSCSFAPNSQRSGYGPGAGAFASTVPGLYNVNSPLYQSPFASGYGLGADAYNLPCASYDQNIPGLCSDLAKGACDKADEGVLHGPAEASFRIYPWMRSSGPDRKRGRQTYTRYQTLELEKEFHFNRYLTRRRRIEIAHALCLTERQIKIWFQNRRMKWKKEHKDESQAPTAAPEDAVPSVSTAADKADEEEEEEEEEEEEEEE</sequence>
<proteinExistence type="evidence at transcript level"/>